<sequence length="338" mass="36890">MQFIDEVKIHVQSGHGGAGCVSFRREKFIPFGGPDGGDGGKGGDVIFTVDPNLSTLMDLRYRPHLKAGRGKNGMGKDRHGANGDDLTIPVPPGTIVKDAETGEILADLTEPGQTVVLLKGGRGGQGNARFTTSTNRAPKFAQPGEDEEERWLRLELKLMADVGLLGFPNVGKSSFITKVSAARPKIADYPFTTIKPNLGVVSYKNYRSFVVADIPGIIEGASEGAGLGHRFLKHVERTNILLHLIDLSWIPDRDPIREYETLNRELALFSPELAGKEQIAVINKIDLPVVRENLPSVIDWFKERGIAVFPISAATGEGIPTLLDEIARHLWGQAEEEW</sequence>
<accession>Q39QR4</accession>
<reference key="1">
    <citation type="journal article" date="2009" name="BMC Microbiol.">
        <title>The genome sequence of Geobacter metallireducens: features of metabolism, physiology and regulation common and dissimilar to Geobacter sulfurreducens.</title>
        <authorList>
            <person name="Aklujkar M."/>
            <person name="Krushkal J."/>
            <person name="DiBartolo G."/>
            <person name="Lapidus A."/>
            <person name="Land M.L."/>
            <person name="Lovley D.R."/>
        </authorList>
    </citation>
    <scope>NUCLEOTIDE SEQUENCE [LARGE SCALE GENOMIC DNA]</scope>
    <source>
        <strain>ATCC 53774 / DSM 7210 / GS-15</strain>
    </source>
</reference>
<keyword id="KW-0963">Cytoplasm</keyword>
<keyword id="KW-0342">GTP-binding</keyword>
<keyword id="KW-0378">Hydrolase</keyword>
<keyword id="KW-0460">Magnesium</keyword>
<keyword id="KW-0479">Metal-binding</keyword>
<keyword id="KW-0547">Nucleotide-binding</keyword>
<keyword id="KW-1185">Reference proteome</keyword>
<organism>
    <name type="scientific">Geobacter metallireducens (strain ATCC 53774 / DSM 7210 / GS-15)</name>
    <dbReference type="NCBI Taxonomy" id="269799"/>
    <lineage>
        <taxon>Bacteria</taxon>
        <taxon>Pseudomonadati</taxon>
        <taxon>Thermodesulfobacteriota</taxon>
        <taxon>Desulfuromonadia</taxon>
        <taxon>Geobacterales</taxon>
        <taxon>Geobacteraceae</taxon>
        <taxon>Geobacter</taxon>
    </lineage>
</organism>
<protein>
    <recommendedName>
        <fullName evidence="1">GTPase Obg</fullName>
        <ecNumber evidence="1">3.6.5.-</ecNumber>
    </recommendedName>
    <alternativeName>
        <fullName evidence="1">GTP-binding protein Obg</fullName>
    </alternativeName>
</protein>
<comment type="function">
    <text evidence="1">An essential GTPase which binds GTP, GDP and possibly (p)ppGpp with moderate affinity, with high nucleotide exchange rates and a fairly low GTP hydrolysis rate. Plays a role in control of the cell cycle, stress response, ribosome biogenesis and in those bacteria that undergo differentiation, in morphogenesis control.</text>
</comment>
<comment type="cofactor">
    <cofactor evidence="1">
        <name>Mg(2+)</name>
        <dbReference type="ChEBI" id="CHEBI:18420"/>
    </cofactor>
</comment>
<comment type="subunit">
    <text evidence="1">Monomer.</text>
</comment>
<comment type="subcellular location">
    <subcellularLocation>
        <location evidence="1">Cytoplasm</location>
    </subcellularLocation>
</comment>
<comment type="similarity">
    <text evidence="1">Belongs to the TRAFAC class OBG-HflX-like GTPase superfamily. OBG GTPase family.</text>
</comment>
<name>OBG_GEOMG</name>
<gene>
    <name evidence="1" type="primary">obg</name>
    <name type="ordered locus">Gmet_3197</name>
</gene>
<dbReference type="EC" id="3.6.5.-" evidence="1"/>
<dbReference type="EMBL" id="CP000148">
    <property type="protein sequence ID" value="ABB33410.1"/>
    <property type="molecule type" value="Genomic_DNA"/>
</dbReference>
<dbReference type="SMR" id="Q39QR4"/>
<dbReference type="STRING" id="269799.Gmet_3197"/>
<dbReference type="KEGG" id="gme:Gmet_3197"/>
<dbReference type="eggNOG" id="COG0536">
    <property type="taxonomic scope" value="Bacteria"/>
</dbReference>
<dbReference type="HOGENOM" id="CLU_011747_2_3_7"/>
<dbReference type="Proteomes" id="UP000007073">
    <property type="component" value="Chromosome"/>
</dbReference>
<dbReference type="GO" id="GO:0005737">
    <property type="term" value="C:cytoplasm"/>
    <property type="evidence" value="ECO:0007669"/>
    <property type="project" value="UniProtKB-SubCell"/>
</dbReference>
<dbReference type="GO" id="GO:0005525">
    <property type="term" value="F:GTP binding"/>
    <property type="evidence" value="ECO:0007669"/>
    <property type="project" value="UniProtKB-UniRule"/>
</dbReference>
<dbReference type="GO" id="GO:0003924">
    <property type="term" value="F:GTPase activity"/>
    <property type="evidence" value="ECO:0007669"/>
    <property type="project" value="UniProtKB-UniRule"/>
</dbReference>
<dbReference type="GO" id="GO:0000287">
    <property type="term" value="F:magnesium ion binding"/>
    <property type="evidence" value="ECO:0007669"/>
    <property type="project" value="InterPro"/>
</dbReference>
<dbReference type="GO" id="GO:0042254">
    <property type="term" value="P:ribosome biogenesis"/>
    <property type="evidence" value="ECO:0007669"/>
    <property type="project" value="UniProtKB-UniRule"/>
</dbReference>
<dbReference type="CDD" id="cd01898">
    <property type="entry name" value="Obg"/>
    <property type="match status" value="1"/>
</dbReference>
<dbReference type="FunFam" id="2.70.210.12:FF:000001">
    <property type="entry name" value="GTPase Obg"/>
    <property type="match status" value="1"/>
</dbReference>
<dbReference type="Gene3D" id="2.70.210.12">
    <property type="entry name" value="GTP1/OBG domain"/>
    <property type="match status" value="1"/>
</dbReference>
<dbReference type="Gene3D" id="3.40.50.300">
    <property type="entry name" value="P-loop containing nucleotide triphosphate hydrolases"/>
    <property type="match status" value="1"/>
</dbReference>
<dbReference type="HAMAP" id="MF_01454">
    <property type="entry name" value="GTPase_Obg"/>
    <property type="match status" value="1"/>
</dbReference>
<dbReference type="InterPro" id="IPR031167">
    <property type="entry name" value="G_OBG"/>
</dbReference>
<dbReference type="InterPro" id="IPR006073">
    <property type="entry name" value="GTP-bd"/>
</dbReference>
<dbReference type="InterPro" id="IPR014100">
    <property type="entry name" value="GTP-bd_Obg/CgtA"/>
</dbReference>
<dbReference type="InterPro" id="IPR006074">
    <property type="entry name" value="GTP1-OBG_CS"/>
</dbReference>
<dbReference type="InterPro" id="IPR006169">
    <property type="entry name" value="GTP1_OBG_dom"/>
</dbReference>
<dbReference type="InterPro" id="IPR036726">
    <property type="entry name" value="GTP1_OBG_dom_sf"/>
</dbReference>
<dbReference type="InterPro" id="IPR045086">
    <property type="entry name" value="OBG_GTPase"/>
</dbReference>
<dbReference type="InterPro" id="IPR027417">
    <property type="entry name" value="P-loop_NTPase"/>
</dbReference>
<dbReference type="NCBIfam" id="TIGR02729">
    <property type="entry name" value="Obg_CgtA"/>
    <property type="match status" value="1"/>
</dbReference>
<dbReference type="NCBIfam" id="NF008954">
    <property type="entry name" value="PRK12296.1"/>
    <property type="match status" value="1"/>
</dbReference>
<dbReference type="NCBIfam" id="NF008955">
    <property type="entry name" value="PRK12297.1"/>
    <property type="match status" value="1"/>
</dbReference>
<dbReference type="NCBIfam" id="NF008956">
    <property type="entry name" value="PRK12299.1"/>
    <property type="match status" value="1"/>
</dbReference>
<dbReference type="PANTHER" id="PTHR11702">
    <property type="entry name" value="DEVELOPMENTALLY REGULATED GTP-BINDING PROTEIN-RELATED"/>
    <property type="match status" value="1"/>
</dbReference>
<dbReference type="PANTHER" id="PTHR11702:SF31">
    <property type="entry name" value="MITOCHONDRIAL RIBOSOME-ASSOCIATED GTPASE 2"/>
    <property type="match status" value="1"/>
</dbReference>
<dbReference type="Pfam" id="PF01018">
    <property type="entry name" value="GTP1_OBG"/>
    <property type="match status" value="1"/>
</dbReference>
<dbReference type="Pfam" id="PF01926">
    <property type="entry name" value="MMR_HSR1"/>
    <property type="match status" value="1"/>
</dbReference>
<dbReference type="PIRSF" id="PIRSF002401">
    <property type="entry name" value="GTP_bd_Obg/CgtA"/>
    <property type="match status" value="1"/>
</dbReference>
<dbReference type="PRINTS" id="PR00326">
    <property type="entry name" value="GTP1OBG"/>
</dbReference>
<dbReference type="SUPFAM" id="SSF82051">
    <property type="entry name" value="Obg GTP-binding protein N-terminal domain"/>
    <property type="match status" value="1"/>
</dbReference>
<dbReference type="SUPFAM" id="SSF52540">
    <property type="entry name" value="P-loop containing nucleoside triphosphate hydrolases"/>
    <property type="match status" value="1"/>
</dbReference>
<dbReference type="PROSITE" id="PS51710">
    <property type="entry name" value="G_OBG"/>
    <property type="match status" value="1"/>
</dbReference>
<dbReference type="PROSITE" id="PS00905">
    <property type="entry name" value="GTP1_OBG"/>
    <property type="match status" value="1"/>
</dbReference>
<dbReference type="PROSITE" id="PS51883">
    <property type="entry name" value="OBG"/>
    <property type="match status" value="1"/>
</dbReference>
<evidence type="ECO:0000255" key="1">
    <source>
        <dbReference type="HAMAP-Rule" id="MF_01454"/>
    </source>
</evidence>
<evidence type="ECO:0000255" key="2">
    <source>
        <dbReference type="PROSITE-ProRule" id="PRU01231"/>
    </source>
</evidence>
<evidence type="ECO:0000256" key="3">
    <source>
        <dbReference type="SAM" id="MobiDB-lite"/>
    </source>
</evidence>
<proteinExistence type="inferred from homology"/>
<feature type="chain" id="PRO_0000385952" description="GTPase Obg">
    <location>
        <begin position="1"/>
        <end position="338"/>
    </location>
</feature>
<feature type="domain" description="Obg" evidence="2">
    <location>
        <begin position="1"/>
        <end position="159"/>
    </location>
</feature>
<feature type="domain" description="OBG-type G" evidence="1">
    <location>
        <begin position="160"/>
        <end position="331"/>
    </location>
</feature>
<feature type="region of interest" description="Disordered" evidence="3">
    <location>
        <begin position="66"/>
        <end position="91"/>
    </location>
</feature>
<feature type="binding site" evidence="1">
    <location>
        <begin position="166"/>
        <end position="173"/>
    </location>
    <ligand>
        <name>GTP</name>
        <dbReference type="ChEBI" id="CHEBI:37565"/>
    </ligand>
</feature>
<feature type="binding site" evidence="1">
    <location>
        <position position="173"/>
    </location>
    <ligand>
        <name>Mg(2+)</name>
        <dbReference type="ChEBI" id="CHEBI:18420"/>
    </ligand>
</feature>
<feature type="binding site" evidence="1">
    <location>
        <begin position="191"/>
        <end position="195"/>
    </location>
    <ligand>
        <name>GTP</name>
        <dbReference type="ChEBI" id="CHEBI:37565"/>
    </ligand>
</feature>
<feature type="binding site" evidence="1">
    <location>
        <position position="193"/>
    </location>
    <ligand>
        <name>Mg(2+)</name>
        <dbReference type="ChEBI" id="CHEBI:18420"/>
    </ligand>
</feature>
<feature type="binding site" evidence="1">
    <location>
        <begin position="213"/>
        <end position="216"/>
    </location>
    <ligand>
        <name>GTP</name>
        <dbReference type="ChEBI" id="CHEBI:37565"/>
    </ligand>
</feature>
<feature type="binding site" evidence="1">
    <location>
        <begin position="283"/>
        <end position="286"/>
    </location>
    <ligand>
        <name>GTP</name>
        <dbReference type="ChEBI" id="CHEBI:37565"/>
    </ligand>
</feature>
<feature type="binding site" evidence="1">
    <location>
        <begin position="312"/>
        <end position="314"/>
    </location>
    <ligand>
        <name>GTP</name>
        <dbReference type="ChEBI" id="CHEBI:37565"/>
    </ligand>
</feature>